<accession>B7H0X1</accession>
<feature type="chain" id="PRO_1000119599" description="Ferrochelatase">
    <location>
        <begin position="1"/>
        <end position="338"/>
    </location>
</feature>
<feature type="binding site" evidence="1">
    <location>
        <position position="202"/>
    </location>
    <ligand>
        <name>Fe cation</name>
        <dbReference type="ChEBI" id="CHEBI:24875"/>
    </ligand>
</feature>
<feature type="binding site" evidence="1">
    <location>
        <position position="283"/>
    </location>
    <ligand>
        <name>Fe cation</name>
        <dbReference type="ChEBI" id="CHEBI:24875"/>
    </ligand>
</feature>
<evidence type="ECO:0000255" key="1">
    <source>
        <dbReference type="HAMAP-Rule" id="MF_00323"/>
    </source>
</evidence>
<gene>
    <name evidence="1" type="primary">hemH</name>
    <name type="ordered locus">ABBFA_003155</name>
</gene>
<organism>
    <name type="scientific">Acinetobacter baumannii (strain AB307-0294)</name>
    <dbReference type="NCBI Taxonomy" id="557600"/>
    <lineage>
        <taxon>Bacteria</taxon>
        <taxon>Pseudomonadati</taxon>
        <taxon>Pseudomonadota</taxon>
        <taxon>Gammaproteobacteria</taxon>
        <taxon>Moraxellales</taxon>
        <taxon>Moraxellaceae</taxon>
        <taxon>Acinetobacter</taxon>
        <taxon>Acinetobacter calcoaceticus/baumannii complex</taxon>
    </lineage>
</organism>
<sequence>MSFEQKPKVTVILANLGTPDEATVPAVRRFLKQFLSDPRVIEIPKFIWWIILNLFVLPFRPKRVAHAYASVWSTDSPMREIVFEQTQRVQAYLERENKQFDLTVLPAMTYGNPGIDAVLEKLATNPQEHVILLPLFPQYSATSTAPLYDAFAKWIPTQRNLPGLTIIKDYYQHPMFIQALAESVLAYQEQHGKPEKLLMSFHGIPQPYADKGDPYADRCRITAKLVAEALHLKDDEWAISFQSRFGKQEWVKPYTDQLLQDWAKQGVKSVQVLSPAFSADCLETLEELAIQNAELFQQAGGGSYAYIPALNSDQAHIDLLAGLVQANLDALTHTLAHR</sequence>
<proteinExistence type="inferred from homology"/>
<name>HEMH_ACIB3</name>
<protein>
    <recommendedName>
        <fullName evidence="1">Ferrochelatase</fullName>
        <ecNumber evidence="1">4.98.1.1</ecNumber>
    </recommendedName>
    <alternativeName>
        <fullName evidence="1">Heme synthase</fullName>
    </alternativeName>
    <alternativeName>
        <fullName evidence="1">Protoheme ferro-lyase</fullName>
    </alternativeName>
</protein>
<comment type="function">
    <text evidence="1">Catalyzes the ferrous insertion into protoporphyrin IX.</text>
</comment>
<comment type="catalytic activity">
    <reaction evidence="1">
        <text>heme b + 2 H(+) = protoporphyrin IX + Fe(2+)</text>
        <dbReference type="Rhea" id="RHEA:22584"/>
        <dbReference type="ChEBI" id="CHEBI:15378"/>
        <dbReference type="ChEBI" id="CHEBI:29033"/>
        <dbReference type="ChEBI" id="CHEBI:57306"/>
        <dbReference type="ChEBI" id="CHEBI:60344"/>
        <dbReference type="EC" id="4.98.1.1"/>
    </reaction>
</comment>
<comment type="pathway">
    <text evidence="1">Porphyrin-containing compound metabolism; protoheme biosynthesis; protoheme from protoporphyrin-IX: step 1/1.</text>
</comment>
<comment type="subcellular location">
    <subcellularLocation>
        <location evidence="1">Cytoplasm</location>
    </subcellularLocation>
</comment>
<comment type="similarity">
    <text evidence="1">Belongs to the ferrochelatase family.</text>
</comment>
<reference key="1">
    <citation type="journal article" date="2008" name="J. Bacteriol.">
        <title>Comparative genome sequence analysis of multidrug-resistant Acinetobacter baumannii.</title>
        <authorList>
            <person name="Adams M.D."/>
            <person name="Goglin K."/>
            <person name="Molyneaux N."/>
            <person name="Hujer K.M."/>
            <person name="Lavender H."/>
            <person name="Jamison J.J."/>
            <person name="MacDonald I.J."/>
            <person name="Martin K.M."/>
            <person name="Russo T."/>
            <person name="Campagnari A.A."/>
            <person name="Hujer A.M."/>
            <person name="Bonomo R.A."/>
            <person name="Gill S.R."/>
        </authorList>
    </citation>
    <scope>NUCLEOTIDE SEQUENCE [LARGE SCALE GENOMIC DNA]</scope>
    <source>
        <strain>AB307-0294</strain>
    </source>
</reference>
<keyword id="KW-0963">Cytoplasm</keyword>
<keyword id="KW-0350">Heme biosynthesis</keyword>
<keyword id="KW-0408">Iron</keyword>
<keyword id="KW-0456">Lyase</keyword>
<keyword id="KW-0479">Metal-binding</keyword>
<keyword id="KW-0627">Porphyrin biosynthesis</keyword>
<dbReference type="EC" id="4.98.1.1" evidence="1"/>
<dbReference type="EMBL" id="CP001172">
    <property type="protein sequence ID" value="ACJ57700.1"/>
    <property type="molecule type" value="Genomic_DNA"/>
</dbReference>
<dbReference type="RefSeq" id="WP_000007331.1">
    <property type="nucleotide sequence ID" value="NZ_CP001172.1"/>
</dbReference>
<dbReference type="SMR" id="B7H0X1"/>
<dbReference type="HOGENOM" id="CLU_018884_0_0_6"/>
<dbReference type="UniPathway" id="UPA00252">
    <property type="reaction ID" value="UER00325"/>
</dbReference>
<dbReference type="Proteomes" id="UP000006924">
    <property type="component" value="Chromosome"/>
</dbReference>
<dbReference type="GO" id="GO:0005737">
    <property type="term" value="C:cytoplasm"/>
    <property type="evidence" value="ECO:0007669"/>
    <property type="project" value="UniProtKB-SubCell"/>
</dbReference>
<dbReference type="GO" id="GO:0004325">
    <property type="term" value="F:ferrochelatase activity"/>
    <property type="evidence" value="ECO:0007669"/>
    <property type="project" value="UniProtKB-UniRule"/>
</dbReference>
<dbReference type="GO" id="GO:0046872">
    <property type="term" value="F:metal ion binding"/>
    <property type="evidence" value="ECO:0007669"/>
    <property type="project" value="UniProtKB-KW"/>
</dbReference>
<dbReference type="GO" id="GO:0006783">
    <property type="term" value="P:heme biosynthetic process"/>
    <property type="evidence" value="ECO:0007669"/>
    <property type="project" value="UniProtKB-UniRule"/>
</dbReference>
<dbReference type="CDD" id="cd00419">
    <property type="entry name" value="Ferrochelatase_C"/>
    <property type="match status" value="1"/>
</dbReference>
<dbReference type="CDD" id="cd03411">
    <property type="entry name" value="Ferrochelatase_N"/>
    <property type="match status" value="1"/>
</dbReference>
<dbReference type="FunFam" id="3.40.50.1400:FF:000002">
    <property type="entry name" value="Ferrochelatase"/>
    <property type="match status" value="1"/>
</dbReference>
<dbReference type="Gene3D" id="3.40.50.1400">
    <property type="match status" value="2"/>
</dbReference>
<dbReference type="HAMAP" id="MF_00323">
    <property type="entry name" value="Ferrochelatase"/>
    <property type="match status" value="1"/>
</dbReference>
<dbReference type="InterPro" id="IPR001015">
    <property type="entry name" value="Ferrochelatase"/>
</dbReference>
<dbReference type="InterPro" id="IPR019772">
    <property type="entry name" value="Ferrochelatase_AS"/>
</dbReference>
<dbReference type="InterPro" id="IPR033644">
    <property type="entry name" value="Ferrochelatase_C"/>
</dbReference>
<dbReference type="InterPro" id="IPR033659">
    <property type="entry name" value="Ferrochelatase_N"/>
</dbReference>
<dbReference type="NCBIfam" id="TIGR00109">
    <property type="entry name" value="hemH"/>
    <property type="match status" value="1"/>
</dbReference>
<dbReference type="PANTHER" id="PTHR11108">
    <property type="entry name" value="FERROCHELATASE"/>
    <property type="match status" value="1"/>
</dbReference>
<dbReference type="PANTHER" id="PTHR11108:SF1">
    <property type="entry name" value="FERROCHELATASE, MITOCHONDRIAL"/>
    <property type="match status" value="1"/>
</dbReference>
<dbReference type="Pfam" id="PF00762">
    <property type="entry name" value="Ferrochelatase"/>
    <property type="match status" value="1"/>
</dbReference>
<dbReference type="SUPFAM" id="SSF53800">
    <property type="entry name" value="Chelatase"/>
    <property type="match status" value="1"/>
</dbReference>
<dbReference type="PROSITE" id="PS00534">
    <property type="entry name" value="FERROCHELATASE"/>
    <property type="match status" value="1"/>
</dbReference>